<protein>
    <recommendedName>
        <fullName evidence="5 8">Protein PECTIC ARABINOGALACTAN SYNTHESIS-RELATED</fullName>
        <ecNumber evidence="6">2.4.1.-</ecNumber>
    </recommendedName>
    <alternativeName>
        <fullName evidence="6">O-fucosyltransferase 26</fullName>
        <shortName evidence="6">O-FucT-26</shortName>
    </alternativeName>
    <alternativeName>
        <fullName evidence="6">O-fucosyltransferase family protein</fullName>
    </alternativeName>
</protein>
<feature type="chain" id="PRO_0000442088" description="Protein PECTIC ARABINOGALACTAN SYNTHESIS-RELATED">
    <location>
        <begin position="1"/>
        <end position="557"/>
    </location>
</feature>
<feature type="topological domain" description="Cytoplasmic" evidence="6">
    <location>
        <begin position="1"/>
        <end position="79"/>
    </location>
</feature>
<feature type="transmembrane region" description="Helical; Signal-anchor for type II membrane protein" evidence="6">
    <location>
        <begin position="80"/>
        <end position="100"/>
    </location>
</feature>
<feature type="topological domain" description="Lumenal" evidence="6">
    <location>
        <begin position="101"/>
        <end position="557"/>
    </location>
</feature>
<feature type="region of interest" description="Disordered" evidence="3">
    <location>
        <begin position="1"/>
        <end position="54"/>
    </location>
</feature>
<feature type="compositionally biased region" description="Low complexity" evidence="3">
    <location>
        <begin position="7"/>
        <end position="20"/>
    </location>
</feature>
<feature type="compositionally biased region" description="Basic and acidic residues" evidence="3">
    <location>
        <begin position="45"/>
        <end position="54"/>
    </location>
</feature>
<feature type="binding site" evidence="1">
    <location>
        <begin position="336"/>
        <end position="338"/>
    </location>
    <ligand>
        <name>substrate</name>
    </ligand>
</feature>
<feature type="glycosylation site" description="N-linked (GlcNAc...) asparagine" evidence="2">
    <location>
        <position position="156"/>
    </location>
</feature>
<feature type="glycosylation site" description="N-linked (GlcNAc...) asparagine" evidence="2">
    <location>
        <position position="188"/>
    </location>
</feature>
<feature type="glycosylation site" description="N-linked (GlcNAc...) asparagine" evidence="2">
    <location>
        <position position="324"/>
    </location>
</feature>
<feature type="glycosylation site" description="N-linked (GlcNAc...) asparagine" evidence="2">
    <location>
        <position position="375"/>
    </location>
</feature>
<dbReference type="EC" id="2.4.1.-" evidence="6"/>
<dbReference type="EMBL" id="KY906066">
    <property type="protein sequence ID" value="ARJ31430.1"/>
    <property type="molecule type" value="mRNA"/>
</dbReference>
<dbReference type="EMBL" id="AP001298">
    <property type="protein sequence ID" value="BAB02197.1"/>
    <property type="molecule type" value="Genomic_DNA"/>
</dbReference>
<dbReference type="EMBL" id="CP002686">
    <property type="protein sequence ID" value="AEE77150.1"/>
    <property type="molecule type" value="Genomic_DNA"/>
</dbReference>
<dbReference type="EMBL" id="AK226720">
    <property type="protein sequence ID" value="BAE98825.1"/>
    <property type="molecule type" value="mRNA"/>
</dbReference>
<dbReference type="EMBL" id="AY087604">
    <property type="protein sequence ID" value="AAM67369.1"/>
    <property type="molecule type" value="mRNA"/>
</dbReference>
<dbReference type="RefSeq" id="NP_566791.2">
    <property type="nucleotide sequence ID" value="NM_113544.5"/>
</dbReference>
<dbReference type="FunCoup" id="Q9LIN9">
    <property type="interactions" value="3244"/>
</dbReference>
<dbReference type="IntAct" id="Q9LIN9">
    <property type="interactions" value="83"/>
</dbReference>
<dbReference type="STRING" id="3702.Q9LIN9"/>
<dbReference type="GlyCosmos" id="Q9LIN9">
    <property type="glycosylation" value="4 sites, No reported glycans"/>
</dbReference>
<dbReference type="GlyGen" id="Q9LIN9">
    <property type="glycosylation" value="4 sites"/>
</dbReference>
<dbReference type="iPTMnet" id="Q9LIN9"/>
<dbReference type="PaxDb" id="3702-AT3G26370.1"/>
<dbReference type="ProteomicsDB" id="248632"/>
<dbReference type="EnsemblPlants" id="AT3G26370.1">
    <property type="protein sequence ID" value="AT3G26370.1"/>
    <property type="gene ID" value="AT3G26370"/>
</dbReference>
<dbReference type="GeneID" id="822241"/>
<dbReference type="Gramene" id="AT3G26370.1">
    <property type="protein sequence ID" value="AT3G26370.1"/>
    <property type="gene ID" value="AT3G26370"/>
</dbReference>
<dbReference type="KEGG" id="ath:AT3G26370"/>
<dbReference type="Araport" id="AT3G26370"/>
<dbReference type="TAIR" id="AT3G26370">
    <property type="gene designation" value="PAGR"/>
</dbReference>
<dbReference type="eggNOG" id="ENOG502QU4K">
    <property type="taxonomic scope" value="Eukaryota"/>
</dbReference>
<dbReference type="HOGENOM" id="CLU_018420_8_2_1"/>
<dbReference type="InParanoid" id="Q9LIN9"/>
<dbReference type="OMA" id="ERASNHI"/>
<dbReference type="OrthoDB" id="1882547at2759"/>
<dbReference type="PhylomeDB" id="Q9LIN9"/>
<dbReference type="UniPathway" id="UPA00845"/>
<dbReference type="CD-CODE" id="4299E36E">
    <property type="entry name" value="Nucleolus"/>
</dbReference>
<dbReference type="PRO" id="PR:Q9LIN9"/>
<dbReference type="Proteomes" id="UP000006548">
    <property type="component" value="Chromosome 3"/>
</dbReference>
<dbReference type="ExpressionAtlas" id="Q9LIN9">
    <property type="expression patterns" value="baseline and differential"/>
</dbReference>
<dbReference type="GO" id="GO:0005768">
    <property type="term" value="C:endosome"/>
    <property type="evidence" value="ECO:0007005"/>
    <property type="project" value="TAIR"/>
</dbReference>
<dbReference type="GO" id="GO:0005794">
    <property type="term" value="C:Golgi apparatus"/>
    <property type="evidence" value="ECO:0000314"/>
    <property type="project" value="UniProtKB"/>
</dbReference>
<dbReference type="GO" id="GO:0005797">
    <property type="term" value="C:Golgi medial cisterna"/>
    <property type="evidence" value="ECO:0007005"/>
    <property type="project" value="TAIR"/>
</dbReference>
<dbReference type="GO" id="GO:0000139">
    <property type="term" value="C:Golgi membrane"/>
    <property type="evidence" value="ECO:0007669"/>
    <property type="project" value="UniProtKB-SubCell"/>
</dbReference>
<dbReference type="GO" id="GO:0005802">
    <property type="term" value="C:trans-Golgi network"/>
    <property type="evidence" value="ECO:0007005"/>
    <property type="project" value="TAIR"/>
</dbReference>
<dbReference type="GO" id="GO:0016757">
    <property type="term" value="F:glycosyltransferase activity"/>
    <property type="evidence" value="ECO:0007669"/>
    <property type="project" value="UniProtKB-KW"/>
</dbReference>
<dbReference type="GO" id="GO:0052325">
    <property type="term" value="P:cell wall pectin biosynthetic process"/>
    <property type="evidence" value="ECO:0000315"/>
    <property type="project" value="UniProtKB"/>
</dbReference>
<dbReference type="GO" id="GO:0006004">
    <property type="term" value="P:fucose metabolic process"/>
    <property type="evidence" value="ECO:0007669"/>
    <property type="project" value="UniProtKB-KW"/>
</dbReference>
<dbReference type="CDD" id="cd11299">
    <property type="entry name" value="O-FucT_plant"/>
    <property type="match status" value="1"/>
</dbReference>
<dbReference type="Gene3D" id="3.40.50.11350">
    <property type="match status" value="1"/>
</dbReference>
<dbReference type="InterPro" id="IPR024709">
    <property type="entry name" value="FucosylTrfase_pln"/>
</dbReference>
<dbReference type="InterPro" id="IPR019378">
    <property type="entry name" value="GDP-Fuc_O-FucTrfase"/>
</dbReference>
<dbReference type="InterPro" id="IPR052272">
    <property type="entry name" value="GT106_glycosyltransferase"/>
</dbReference>
<dbReference type="PANTHER" id="PTHR31933">
    <property type="entry name" value="O-FUCOSYLTRANSFERASE 2-RELATED"/>
    <property type="match status" value="1"/>
</dbReference>
<dbReference type="PANTHER" id="PTHR31933:SF1">
    <property type="entry name" value="PROTEIN PECTIC ARABINOGALACTAN SYNTHESIS-RELATED"/>
    <property type="match status" value="1"/>
</dbReference>
<dbReference type="Pfam" id="PF10250">
    <property type="entry name" value="O-FucT"/>
    <property type="match status" value="1"/>
</dbReference>
<dbReference type="PIRSF" id="PIRSF009360">
    <property type="entry name" value="UCP009360"/>
    <property type="match status" value="1"/>
</dbReference>
<proteinExistence type="evidence at transcript level"/>
<gene>
    <name evidence="5 8" type="primary">PAGR</name>
    <name evidence="6" type="synonym">OFUT26</name>
    <name evidence="7" type="ordered locus">At3g26370</name>
    <name evidence="9" type="ORF">F20C19.9</name>
</gene>
<accession>Q9LIN9</accession>
<accession>Q8LAU4</accession>
<sequence length="557" mass="63367">MAELRHSSSLGSRSSSSPLRAAGDEDSSSPHVHDHSPNGGDDEDGRPRHPSRDRDRPIWFHSLFPFFGDDPRVSPQKNKISLLLILILAIASLISVYGIINHLNAPYLCKKDGIVLNCPHVKESPSPWENPLSATTSWKPCAERRIGGISDLPPENETNGYVFIHAEGGLNQQRIAICNAVAVAKIMNATLILPVLKQDQIWKDTTKFEDIFDVDHFIDYLKDDVRIVRDIPDWFTDKAELFSSIRRTVKNIPKYAAAQFYIDNVLPRIKEKKIMALKPFVDRLGYDNVPQEINRLRCRVNYHALKFLPEIEQMADSLVSRMRNRTGNPNPYMALHLRFEKGMVGLSFCDFVGTREEKVKMAEYRQKEWPRRFKNGSHLWQLALQKRKEGRCPLEPGEVAVILRAMGYPKETQIYVASGQVYGGQNRMAPLRNMFPNLVTKEDLAGKEELTTFRKHVTSLAALDFLVCLKSDVFVMTHGGNFAKLIIGARRYMGHRQKSIKPDKGLMSKSFGDPYMGWATFVEDVVVTHQTRTGLPEETFPNYDLWENPLTPCMCKA</sequence>
<keyword id="KW-0119">Carbohydrate metabolism</keyword>
<keyword id="KW-0961">Cell wall biogenesis/degradation</keyword>
<keyword id="KW-0294">Fucose metabolism</keyword>
<keyword id="KW-0325">Glycoprotein</keyword>
<keyword id="KW-0328">Glycosyltransferase</keyword>
<keyword id="KW-0333">Golgi apparatus</keyword>
<keyword id="KW-0472">Membrane</keyword>
<keyword id="KW-1185">Reference proteome</keyword>
<keyword id="KW-0735">Signal-anchor</keyword>
<keyword id="KW-0808">Transferase</keyword>
<keyword id="KW-0812">Transmembrane</keyword>
<keyword id="KW-1133">Transmembrane helix</keyword>
<name>PAGR_ARATH</name>
<reference key="1">
    <citation type="submission" date="2017-04" db="EMBL/GenBank/DDBJ databases">
        <title>Arabidopsis glycosyltransferases: an update.</title>
        <authorList>
            <person name="Zeng W."/>
            <person name="Gluza P."/>
            <person name="Heazlewood J."/>
        </authorList>
    </citation>
    <scope>NUCLEOTIDE SEQUENCE [MRNA]</scope>
    <source>
        <strain>cv. Columbia</strain>
    </source>
</reference>
<reference key="2">
    <citation type="journal article" date="2000" name="DNA Res.">
        <title>Structural analysis of Arabidopsis thaliana chromosome 3. II. Sequence features of the 4,251,695 bp regions covered by 90 P1, TAC and BAC clones.</title>
        <authorList>
            <person name="Kaneko T."/>
            <person name="Katoh T."/>
            <person name="Sato S."/>
            <person name="Nakamura Y."/>
            <person name="Asamizu E."/>
            <person name="Tabata S."/>
        </authorList>
    </citation>
    <scope>NUCLEOTIDE SEQUENCE [LARGE SCALE GENOMIC DNA]</scope>
    <source>
        <strain>cv. Columbia</strain>
    </source>
</reference>
<reference key="3">
    <citation type="journal article" date="2017" name="Plant J.">
        <title>Araport11: a complete reannotation of the Arabidopsis thaliana reference genome.</title>
        <authorList>
            <person name="Cheng C.Y."/>
            <person name="Krishnakumar V."/>
            <person name="Chan A.P."/>
            <person name="Thibaud-Nissen F."/>
            <person name="Schobel S."/>
            <person name="Town C.D."/>
        </authorList>
    </citation>
    <scope>GENOME REANNOTATION</scope>
    <source>
        <strain>cv. Columbia</strain>
    </source>
</reference>
<reference key="4">
    <citation type="submission" date="2006-07" db="EMBL/GenBank/DDBJ databases">
        <title>Large-scale analysis of RIKEN Arabidopsis full-length (RAFL) cDNAs.</title>
        <authorList>
            <person name="Totoki Y."/>
            <person name="Seki M."/>
            <person name="Ishida J."/>
            <person name="Nakajima M."/>
            <person name="Enju A."/>
            <person name="Kamiya A."/>
            <person name="Narusaka M."/>
            <person name="Shin-i T."/>
            <person name="Nakagawa M."/>
            <person name="Sakamoto N."/>
            <person name="Oishi K."/>
            <person name="Kohara Y."/>
            <person name="Kobayashi M."/>
            <person name="Toyoda A."/>
            <person name="Sakaki Y."/>
            <person name="Sakurai T."/>
            <person name="Iida K."/>
            <person name="Akiyama K."/>
            <person name="Satou M."/>
            <person name="Toyoda T."/>
            <person name="Konagaya A."/>
            <person name="Carninci P."/>
            <person name="Kawai J."/>
            <person name="Hayashizaki Y."/>
            <person name="Shinozaki K."/>
        </authorList>
    </citation>
    <scope>NUCLEOTIDE SEQUENCE [LARGE SCALE MRNA]</scope>
    <source>
        <strain>cv. Columbia</strain>
    </source>
</reference>
<reference key="5">
    <citation type="submission" date="2002-03" db="EMBL/GenBank/DDBJ databases">
        <title>Full-length cDNA from Arabidopsis thaliana.</title>
        <authorList>
            <person name="Brover V.V."/>
            <person name="Troukhan M.E."/>
            <person name="Alexandrov N.A."/>
            <person name="Lu Y.-P."/>
            <person name="Flavell R.B."/>
            <person name="Feldmann K.A."/>
        </authorList>
    </citation>
    <scope>NUCLEOTIDE SEQUENCE [LARGE SCALE MRNA] OF 216-557</scope>
</reference>
<reference key="6">
    <citation type="journal article" date="2012" name="Front. Plant Sci.">
        <title>Plant glycosyltransferases beyond CAZy: a perspective on DUF families.</title>
        <authorList>
            <person name="Hansen S.F."/>
            <person name="Harholt J."/>
            <person name="Oikawa A."/>
            <person name="Scheller H.V."/>
        </authorList>
    </citation>
    <scope>GENE FAMILY</scope>
    <scope>REVIEW</scope>
</reference>
<reference key="7">
    <citation type="journal article" date="2012" name="PLoS ONE">
        <title>The FRIABLE1 gene product affects cell adhesion in Arabidopsis.</title>
        <authorList>
            <person name="Neumetzler L."/>
            <person name="Humphrey T."/>
            <person name="Lumba S."/>
            <person name="Snyder S."/>
            <person name="Yeats T.H."/>
            <person name="Usadel B."/>
            <person name="Vasilevski A."/>
            <person name="Patel J."/>
            <person name="Rose J.K."/>
            <person name="Persson S."/>
            <person name="Bonetta D."/>
        </authorList>
    </citation>
    <scope>GENE FAMILY</scope>
</reference>
<reference key="8">
    <citation type="journal article" date="2012" name="PLoS ONE">
        <title>Identification of putative rhamnogalacturonan-II specific glycosyltransferases in Arabidopsis using a combination of bioinformatics approaches.</title>
        <authorList>
            <person name="Voxeur A."/>
            <person name="Andre A."/>
            <person name="Breton C."/>
            <person name="Lerouge P."/>
        </authorList>
    </citation>
    <scope>GENE FAMILY</scope>
</reference>
<reference key="9">
    <citation type="journal article" date="2013" name="Plant J.">
        <title>Identification of an additional protein involved in mannan biosynthesis.</title>
        <authorList>
            <person name="Wang Y."/>
            <person name="Mortimer J.C."/>
            <person name="Davis J."/>
            <person name="Dupree P."/>
            <person name="Keegstra K."/>
        </authorList>
    </citation>
    <scope>GENE FAMILY</scope>
</reference>
<reference key="10">
    <citation type="journal article" date="2014" name="Plant J.">
        <title>The plant glycosyltransferase clone collection for functional genomics.</title>
        <authorList>
            <person name="Lao J."/>
            <person name="Oikawa A."/>
            <person name="Bromley J.R."/>
            <person name="McInerney P."/>
            <person name="Suttangkakul A."/>
            <person name="Smith-Moritz A.M."/>
            <person name="Plahar H."/>
            <person name="Chiu T.-Y."/>
            <person name="Gonzalez Fernandez-Nino S.M.G."/>
            <person name="Ebert B."/>
            <person name="Yang F."/>
            <person name="Christiansen K.M."/>
            <person name="Hansen S.F."/>
            <person name="Stonebloom S."/>
            <person name="Adams P.D."/>
            <person name="Ronald P.C."/>
            <person name="Hillson N.J."/>
            <person name="Hadi M.Z."/>
            <person name="Vega-Sanchez M.E."/>
            <person name="Loque D."/>
            <person name="Scheller H.V."/>
            <person name="Heazlewood J.L."/>
        </authorList>
    </citation>
    <scope>WEB RESOURCE</scope>
</reference>
<reference key="11">
    <citation type="journal article" date="2016" name="BMC Plant Biol.">
        <title>A DUF-246 family glycosyltransferase-like gene affects male fertility and the biosynthesis of pectic arabinogalactans.</title>
        <authorList>
            <person name="Stonebloom S."/>
            <person name="Ebert B."/>
            <person name="Xiong G."/>
            <person name="Pattathil S."/>
            <person name="Birdseye D."/>
            <person name="Lao J."/>
            <person name="Pauly M."/>
            <person name="Hahn M.G."/>
            <person name="Heazlewood J.L."/>
            <person name="Scheller H.V."/>
        </authorList>
    </citation>
    <scope>TISSUE SPECIFICITY</scope>
    <scope>DISRUPTION PHENOTYPE</scope>
    <scope>FUNCTION</scope>
    <scope>SUBCELLULAR LOCATION</scope>
</reference>
<comment type="function">
    <text evidence="4">Glycosyltransferase involved in the biosynthesis of pectic type-II arabinogalactans.</text>
</comment>
<comment type="pathway">
    <text evidence="6">Glycan metabolism; pectin biosynthesis.</text>
</comment>
<comment type="subcellular location">
    <subcellularLocation>
        <location evidence="4">Golgi apparatus membrane</location>
        <topology evidence="6">Single-pass type II membrane protein</topology>
    </subcellularLocation>
</comment>
<comment type="tissue specificity">
    <text evidence="4">Widely expressed with the highest expression in reproductive tissues and roots.</text>
</comment>
<comment type="disruption phenotype">
    <text evidence="4">Homozygote mutants are non viable. Heterozygote mutants display affected pollen germination.</text>
</comment>
<comment type="miscellaneous">
    <text evidence="4">Overexpression of PAGR positively affects the biosynthesis of type-II arabinogalactans.</text>
</comment>
<comment type="similarity">
    <text evidence="6">Belongs to the glycosyltransferase GT106 family.</text>
</comment>
<evidence type="ECO:0000250" key="1">
    <source>
        <dbReference type="UniProtKB" id="Q9H488"/>
    </source>
</evidence>
<evidence type="ECO:0000255" key="2">
    <source>
        <dbReference type="PROSITE-ProRule" id="PRU00498"/>
    </source>
</evidence>
<evidence type="ECO:0000256" key="3">
    <source>
        <dbReference type="SAM" id="MobiDB-lite"/>
    </source>
</evidence>
<evidence type="ECO:0000269" key="4">
    <source>
    </source>
</evidence>
<evidence type="ECO:0000303" key="5">
    <source>
    </source>
</evidence>
<evidence type="ECO:0000305" key="6"/>
<evidence type="ECO:0000312" key="7">
    <source>
        <dbReference type="Araport" id="AT3G26370"/>
    </source>
</evidence>
<evidence type="ECO:0000312" key="8">
    <source>
        <dbReference type="EMBL" id="ARJ31430.1"/>
    </source>
</evidence>
<evidence type="ECO:0000312" key="9">
    <source>
        <dbReference type="EMBL" id="BAB02197.1"/>
    </source>
</evidence>
<organism>
    <name type="scientific">Arabidopsis thaliana</name>
    <name type="common">Mouse-ear cress</name>
    <dbReference type="NCBI Taxonomy" id="3702"/>
    <lineage>
        <taxon>Eukaryota</taxon>
        <taxon>Viridiplantae</taxon>
        <taxon>Streptophyta</taxon>
        <taxon>Embryophyta</taxon>
        <taxon>Tracheophyta</taxon>
        <taxon>Spermatophyta</taxon>
        <taxon>Magnoliopsida</taxon>
        <taxon>eudicotyledons</taxon>
        <taxon>Gunneridae</taxon>
        <taxon>Pentapetalae</taxon>
        <taxon>rosids</taxon>
        <taxon>malvids</taxon>
        <taxon>Brassicales</taxon>
        <taxon>Brassicaceae</taxon>
        <taxon>Camelineae</taxon>
        <taxon>Arabidopsis</taxon>
    </lineage>
</organism>